<name>PA11_DOLMA</name>
<evidence type="ECO:0000250" key="1">
    <source>
        <dbReference type="UniProtKB" id="A0A0M3KKW3"/>
    </source>
</evidence>
<evidence type="ECO:0000250" key="2">
    <source>
        <dbReference type="UniProtKB" id="P0DMB4"/>
    </source>
</evidence>
<evidence type="ECO:0000250" key="3">
    <source>
        <dbReference type="UniProtKB" id="P0DMB7"/>
    </source>
</evidence>
<evidence type="ECO:0000255" key="4"/>
<evidence type="ECO:0000255" key="5">
    <source>
        <dbReference type="PROSITE-ProRule" id="PRU10037"/>
    </source>
</evidence>
<evidence type="ECO:0000269" key="6">
    <source>
    </source>
</evidence>
<evidence type="ECO:0000303" key="7">
    <source>
    </source>
</evidence>
<evidence type="ECO:0000305" key="8"/>
<evidence type="ECO:0000305" key="9">
    <source>
    </source>
</evidence>
<reference key="1">
    <citation type="journal article" date="1993" name="FEBS Lett.">
        <title>Sequence similarity of a hornet (D. maculata) venom allergen phospholipase A1 with mammalian lipases.</title>
        <authorList>
            <person name="Soldatova L."/>
            <person name="Kochoumian L."/>
            <person name="King T.P."/>
        </authorList>
    </citation>
    <scope>NUCLEOTIDE SEQUENCE [MRNA]</scope>
    <scope>PARTIAL PROTEIN SEQUENCE</scope>
    <scope>BIOPHYSICOCHEMICAL PROPERTIES</scope>
    <scope>SUBCELLULAR LOCATION</scope>
    <source>
        <tissue>Venom</tissue>
        <tissue>Venom gland</tissue>
    </source>
</reference>
<protein>
    <recommendedName>
        <fullName evidence="7">Phospholipase A1 1</fullName>
        <shortName evidence="8">PLA1</shortName>
        <ecNumber evidence="2">3.1.1.32</ecNumber>
    </recommendedName>
    <alternativeName>
        <fullName evidence="7">Allergen Dol m I</fullName>
    </alternativeName>
    <allergenName evidence="8">Dol m 1</allergenName>
</protein>
<comment type="function">
    <text evidence="2 3">Catalyzes the hydrolysis of phosphatidylcholine with phospholipase A1 activity (By similarity). May act as an allergen and induce hemolytic activity (By similarity).</text>
</comment>
<comment type="catalytic activity">
    <reaction evidence="2">
        <text>a 1,2-diacyl-sn-glycero-3-phosphocholine + H2O = a 2-acyl-sn-glycero-3-phosphocholine + a fatty acid + H(+)</text>
        <dbReference type="Rhea" id="RHEA:18689"/>
        <dbReference type="ChEBI" id="CHEBI:15377"/>
        <dbReference type="ChEBI" id="CHEBI:15378"/>
        <dbReference type="ChEBI" id="CHEBI:28868"/>
        <dbReference type="ChEBI" id="CHEBI:57643"/>
        <dbReference type="ChEBI" id="CHEBI:57875"/>
        <dbReference type="EC" id="3.1.1.32"/>
    </reaction>
</comment>
<comment type="biophysicochemical properties">
    <kinetics>
        <Vmax evidence="6">280.0 umol/min/mg enzyme toward egg yolk</Vmax>
    </kinetics>
</comment>
<comment type="subcellular location">
    <subcellularLocation>
        <location evidence="6">Secreted</location>
    </subcellularLocation>
</comment>
<comment type="tissue specificity">
    <text evidence="9">Expressed by the venom gland.</text>
</comment>
<comment type="allergen">
    <text evidence="9">Causes an allergic reaction in human.</text>
</comment>
<comment type="similarity">
    <text evidence="8">Belongs to the AB hydrolase superfamily. Lipase family.</text>
</comment>
<feature type="signal peptide" evidence="4">
    <location>
        <begin position="1" status="less than"/>
        <end position="7"/>
    </location>
</feature>
<feature type="propeptide" id="PRO_0000425186" evidence="9">
    <location>
        <begin position="8"/>
        <end position="17"/>
    </location>
</feature>
<feature type="chain" id="PRO_0000017812" description="Phospholipase A1 1" evidence="6">
    <location>
        <begin position="18"/>
        <end position="317"/>
    </location>
</feature>
<feature type="active site" description="Nucleophile" evidence="1">
    <location>
        <position position="154"/>
    </location>
</feature>
<feature type="active site" description="Charge relay system" evidence="5">
    <location>
        <position position="182"/>
    </location>
</feature>
<feature type="active site" description="Charge relay system" evidence="5">
    <location>
        <position position="246"/>
    </location>
</feature>
<feature type="glycosylation site" description="N-linked (GlcNAc...) asparagine" evidence="9">
    <location>
        <position position="25"/>
    </location>
</feature>
<feature type="glycosylation site" description="N-linked (GlcNAc...) asparagine" evidence="4">
    <location>
        <position position="229"/>
    </location>
</feature>
<feature type="disulfide bond" evidence="1">
    <location>
        <begin position="21"/>
        <end position="104"/>
    </location>
</feature>
<feature type="disulfide bond" evidence="1">
    <location>
        <begin position="193"/>
        <end position="198"/>
    </location>
</feature>
<feature type="disulfide bond" evidence="1">
    <location>
        <begin position="236"/>
        <end position="244"/>
    </location>
</feature>
<feature type="disulfide bond" evidence="1">
    <location>
        <begin position="261"/>
        <end position="285"/>
    </location>
</feature>
<feature type="disulfide bond" evidence="1">
    <location>
        <begin position="262"/>
        <end position="310"/>
    </location>
</feature>
<feature type="disulfide bond" evidence="1">
    <location>
        <begin position="278"/>
        <end position="283"/>
    </location>
</feature>
<feature type="sequence variant" evidence="6">
    <original>N</original>
    <variation>S</variation>
    <location>
        <position position="271"/>
    </location>
</feature>
<feature type="non-terminal residue">
    <location>
        <position position="1"/>
    </location>
</feature>
<dbReference type="EC" id="3.1.1.32" evidence="2"/>
<dbReference type="EMBL" id="X66869">
    <property type="protein sequence ID" value="CAA47341.1"/>
    <property type="molecule type" value="mRNA"/>
</dbReference>
<dbReference type="PIR" id="S32406">
    <property type="entry name" value="S32406"/>
</dbReference>
<dbReference type="SMR" id="Q06478"/>
<dbReference type="Allergome" id="1667">
    <property type="allergen name" value="Dol m 1.0101"/>
</dbReference>
<dbReference type="Allergome" id="328">
    <property type="allergen name" value="Dol m 1"/>
</dbReference>
<dbReference type="ESTHER" id="dolma-ppla1">
    <property type="family name" value="Insect_Phospholipase"/>
</dbReference>
<dbReference type="iPTMnet" id="Q06478"/>
<dbReference type="GO" id="GO:0005615">
    <property type="term" value="C:extracellular space"/>
    <property type="evidence" value="ECO:0007669"/>
    <property type="project" value="TreeGrafter"/>
</dbReference>
<dbReference type="GO" id="GO:0008970">
    <property type="term" value="F:phospholipase A1 activity"/>
    <property type="evidence" value="ECO:0007669"/>
    <property type="project" value="UniProtKB-EC"/>
</dbReference>
<dbReference type="GO" id="GO:0004623">
    <property type="term" value="F:phospholipase A2 activity"/>
    <property type="evidence" value="ECO:0007669"/>
    <property type="project" value="UniProtKB-EC"/>
</dbReference>
<dbReference type="GO" id="GO:0016042">
    <property type="term" value="P:lipid catabolic process"/>
    <property type="evidence" value="ECO:0007669"/>
    <property type="project" value="UniProtKB-KW"/>
</dbReference>
<dbReference type="CDD" id="cd00707">
    <property type="entry name" value="Pancreat_lipase_like"/>
    <property type="match status" value="1"/>
</dbReference>
<dbReference type="Gene3D" id="3.40.50.1820">
    <property type="entry name" value="alpha/beta hydrolase"/>
    <property type="match status" value="1"/>
</dbReference>
<dbReference type="InterPro" id="IPR029058">
    <property type="entry name" value="AB_hydrolase_fold"/>
</dbReference>
<dbReference type="InterPro" id="IPR002334">
    <property type="entry name" value="Allerg_PlipaseA1"/>
</dbReference>
<dbReference type="InterPro" id="IPR013818">
    <property type="entry name" value="Lipase"/>
</dbReference>
<dbReference type="InterPro" id="IPR033906">
    <property type="entry name" value="Lipase_N"/>
</dbReference>
<dbReference type="InterPro" id="IPR000734">
    <property type="entry name" value="TAG_lipase"/>
</dbReference>
<dbReference type="PANTHER" id="PTHR11610">
    <property type="entry name" value="LIPASE"/>
    <property type="match status" value="1"/>
</dbReference>
<dbReference type="PANTHER" id="PTHR11610:SF178">
    <property type="entry name" value="LIPASE MEMBER H-A-LIKE PROTEIN"/>
    <property type="match status" value="1"/>
</dbReference>
<dbReference type="Pfam" id="PF00151">
    <property type="entry name" value="Lipase"/>
    <property type="match status" value="1"/>
</dbReference>
<dbReference type="PRINTS" id="PR00825">
    <property type="entry name" value="DOLALLERGEN"/>
</dbReference>
<dbReference type="SUPFAM" id="SSF53474">
    <property type="entry name" value="alpha/beta-Hydrolases"/>
    <property type="match status" value="1"/>
</dbReference>
<dbReference type="PROSITE" id="PS00120">
    <property type="entry name" value="LIPASE_SER"/>
    <property type="match status" value="1"/>
</dbReference>
<accession>Q06478</accession>
<proteinExistence type="evidence at protein level"/>
<keyword id="KW-0020">Allergen</keyword>
<keyword id="KW-0903">Direct protein sequencing</keyword>
<keyword id="KW-1015">Disulfide bond</keyword>
<keyword id="KW-0325">Glycoprotein</keyword>
<keyword id="KW-0378">Hydrolase</keyword>
<keyword id="KW-0442">Lipid degradation</keyword>
<keyword id="KW-0443">Lipid metabolism</keyword>
<keyword id="KW-0964">Secreted</keyword>
<keyword id="KW-0732">Signal</keyword>
<organism>
    <name type="scientific">Dolichovespula maculata</name>
    <name type="common">Bald-faced hornet</name>
    <name type="synonym">Vespula maculata</name>
    <dbReference type="NCBI Taxonomy" id="7441"/>
    <lineage>
        <taxon>Eukaryota</taxon>
        <taxon>Metazoa</taxon>
        <taxon>Ecdysozoa</taxon>
        <taxon>Arthropoda</taxon>
        <taxon>Hexapoda</taxon>
        <taxon>Insecta</taxon>
        <taxon>Pterygota</taxon>
        <taxon>Neoptera</taxon>
        <taxon>Endopterygota</taxon>
        <taxon>Hymenoptera</taxon>
        <taxon>Apocrita</taxon>
        <taxon>Aculeata</taxon>
        <taxon>Vespoidea</taxon>
        <taxon>Vespidae</taxon>
        <taxon>Vespinae</taxon>
        <taxon>Dolichovespula</taxon>
    </lineage>
</organism>
<sequence>RLIMFVGDPSSSNELDRFSVCPFSNDTVKMIFLTRENRKHDFYTLDTMNRHNEFKKSIIKRPVVFITHGFTSSATEKNFVAMSEALMHTGDFLIIMVDWRMAACTDEYPGLKYMFYKAAVGNTRLVGNFIAMIAKKLVEQYKVPMTNIRLVGHSLGAHISGFAGKRVQELKLGKFSEIIGLDPAGPSFKKNDCSERICETDAHYVQILHTSSNLGTERTLGTVDFYINNGSNQPGCRYIIGETCSHTRAVKYFTECIRRECCLIGVPQSKNPQPVSKCTRNECVCVGLNAKKYPKRGSFYVPVEAEAPYCNNNGKII</sequence>